<evidence type="ECO:0000250" key="1">
    <source>
        <dbReference type="UniProtKB" id="Q99732"/>
    </source>
</evidence>
<evidence type="ECO:0000255" key="2">
    <source>
        <dbReference type="PROSITE-ProRule" id="PRU01181"/>
    </source>
</evidence>
<evidence type="ECO:0000305" key="3"/>
<evidence type="ECO:0000312" key="4">
    <source>
        <dbReference type="HGNC" id="HGNC:53927"/>
    </source>
</evidence>
<gene>
    <name evidence="4" type="primary">LITAFD</name>
</gene>
<name>LITAD_HUMAN</name>
<dbReference type="EMBL" id="AC022167">
    <property type="status" value="NOT_ANNOTATED_CDS"/>
    <property type="molecule type" value="Genomic_DNA"/>
</dbReference>
<dbReference type="CCDS" id="CCDS92105.1"/>
<dbReference type="RefSeq" id="NP_001382362.1">
    <property type="nucleotide sequence ID" value="NM_001395433.1"/>
</dbReference>
<dbReference type="RefSeq" id="NP_001382363.1">
    <property type="nucleotide sequence ID" value="NM_001395434.1"/>
</dbReference>
<dbReference type="FunCoup" id="A0A1B0GVX0">
    <property type="interactions" value="1"/>
</dbReference>
<dbReference type="STRING" id="9606.ENSP00000490685"/>
<dbReference type="BioMuta" id="ENSG00000283516"/>
<dbReference type="Ensembl" id="ENST00000636296.2">
    <property type="protein sequence ID" value="ENSP00000490685.1"/>
    <property type="gene ID" value="ENSG00000283516.3"/>
</dbReference>
<dbReference type="Ensembl" id="ENST00000637237.1">
    <property type="protein sequence ID" value="ENSP00000490446.1"/>
    <property type="gene ID" value="ENSG00000283516.3"/>
</dbReference>
<dbReference type="Ensembl" id="ENST00000850638.1">
    <property type="protein sequence ID" value="ENSP00000520917.1"/>
    <property type="gene ID" value="ENSG00000283516.3"/>
</dbReference>
<dbReference type="Ensembl" id="ENST00000850639.1">
    <property type="protein sequence ID" value="ENSP00000520918.1"/>
    <property type="gene ID" value="ENSG00000283516.3"/>
</dbReference>
<dbReference type="GeneID" id="101929989"/>
<dbReference type="MANE-Select" id="ENST00000636296.2">
    <property type="protein sequence ID" value="ENSP00000490685.1"/>
    <property type="RefSeq nucleotide sequence ID" value="NM_001395433.1"/>
    <property type="RefSeq protein sequence ID" value="NP_001382362.1"/>
</dbReference>
<dbReference type="AGR" id="HGNC:53927"/>
<dbReference type="GeneCards" id="LITAFD"/>
<dbReference type="HGNC" id="HGNC:53927">
    <property type="gene designation" value="LITAFD"/>
</dbReference>
<dbReference type="HPA" id="ENSG00000283516">
    <property type="expression patterns" value="Tissue enriched (testis)"/>
</dbReference>
<dbReference type="neXtProt" id="NX_A0A1B0GVX0"/>
<dbReference type="VEuPathDB" id="HostDB:ENSG00000283516"/>
<dbReference type="GeneTree" id="ENSGT00940000163474"/>
<dbReference type="InParanoid" id="A0A1B0GVX0"/>
<dbReference type="OMA" id="YCGNYIV"/>
<dbReference type="OrthoDB" id="4713066at2759"/>
<dbReference type="PAN-GO" id="A0A1B0GVX0">
    <property type="GO annotations" value="5 GO annotations based on evolutionary models"/>
</dbReference>
<dbReference type="Proteomes" id="UP000005640">
    <property type="component" value="Chromosome 16"/>
</dbReference>
<dbReference type="RNAct" id="A0A1B0GVX0">
    <property type="molecule type" value="protein"/>
</dbReference>
<dbReference type="Bgee" id="ENSG00000283516">
    <property type="expression patterns" value="Expressed in male germ line stem cell (sensu Vertebrata) in testis and 38 other cell types or tissues"/>
</dbReference>
<dbReference type="ExpressionAtlas" id="A0A1B0GVX0">
    <property type="expression patterns" value="baseline and differential"/>
</dbReference>
<dbReference type="GO" id="GO:0098560">
    <property type="term" value="C:cytoplasmic side of late endosome membrane"/>
    <property type="evidence" value="ECO:0000318"/>
    <property type="project" value="GO_Central"/>
</dbReference>
<dbReference type="GO" id="GO:0098574">
    <property type="term" value="C:cytoplasmic side of lysosomal membrane"/>
    <property type="evidence" value="ECO:0000318"/>
    <property type="project" value="GO_Central"/>
</dbReference>
<dbReference type="GO" id="GO:0005634">
    <property type="term" value="C:nucleus"/>
    <property type="evidence" value="ECO:0000318"/>
    <property type="project" value="GO_Central"/>
</dbReference>
<dbReference type="GO" id="GO:0008270">
    <property type="term" value="F:zinc ion binding"/>
    <property type="evidence" value="ECO:0000318"/>
    <property type="project" value="GO_Central"/>
</dbReference>
<dbReference type="GO" id="GO:0001817">
    <property type="term" value="P:regulation of cytokine production"/>
    <property type="evidence" value="ECO:0000318"/>
    <property type="project" value="GO_Central"/>
</dbReference>
<dbReference type="InterPro" id="IPR006629">
    <property type="entry name" value="LITAF"/>
</dbReference>
<dbReference type="InterPro" id="IPR037519">
    <property type="entry name" value="LITAF_fam"/>
</dbReference>
<dbReference type="PANTHER" id="PTHR23292">
    <property type="entry name" value="LIPOPOLYSACCHARIDE-INDUCED TUMOR NECROSIS FACTOR-ALPHA FACTOR"/>
    <property type="match status" value="1"/>
</dbReference>
<dbReference type="PANTHER" id="PTHR23292:SF27">
    <property type="entry name" value="LITAF DOMAIN-CONTAINING PROTEIN"/>
    <property type="match status" value="1"/>
</dbReference>
<dbReference type="Pfam" id="PF10601">
    <property type="entry name" value="zf-LITAF-like"/>
    <property type="match status" value="1"/>
</dbReference>
<dbReference type="SMART" id="SM00714">
    <property type="entry name" value="LITAF"/>
    <property type="match status" value="1"/>
</dbReference>
<dbReference type="PROSITE" id="PS51837">
    <property type="entry name" value="LITAF"/>
    <property type="match status" value="1"/>
</dbReference>
<feature type="chain" id="PRO_0000447323" description="LITAF domain-containing protein">
    <location>
        <begin position="1"/>
        <end position="72"/>
    </location>
</feature>
<feature type="domain" description="LITAF" evidence="2">
    <location>
        <begin position="1"/>
        <end position="71"/>
    </location>
</feature>
<feature type="region of interest" description="Membrane-binding amphipathic helix" evidence="1">
    <location>
        <begin position="22"/>
        <end position="45"/>
    </location>
</feature>
<feature type="binding site" evidence="2">
    <location>
        <position position="7"/>
    </location>
    <ligand>
        <name>Zn(2+)</name>
        <dbReference type="ChEBI" id="CHEBI:29105"/>
    </ligand>
</feature>
<feature type="binding site" evidence="2">
    <location>
        <position position="10"/>
    </location>
    <ligand>
        <name>Zn(2+)</name>
        <dbReference type="ChEBI" id="CHEBI:29105"/>
    </ligand>
</feature>
<feature type="binding site" evidence="2">
    <location>
        <position position="59"/>
    </location>
    <ligand>
        <name>Zn(2+)</name>
        <dbReference type="ChEBI" id="CHEBI:29105"/>
    </ligand>
</feature>
<feature type="binding site" evidence="2">
    <location>
        <position position="62"/>
    </location>
    <ligand>
        <name>Zn(2+)</name>
        <dbReference type="ChEBI" id="CHEBI:29105"/>
    </ligand>
</feature>
<protein>
    <recommendedName>
        <fullName evidence="3">LITAF domain-containing protein</fullName>
    </recommendedName>
    <alternativeName>
        <fullName evidence="3">LITAF-like protein</fullName>
    </alternativeName>
</protein>
<accession>A0A1B0GVX0</accession>
<sequence length="72" mass="8245">MPVQAVCPYCGNRIITVTTFVPGALTWLLCTTLFLFGYVLGCCFLAFCIRSLMDVKHSCPVCQRELFYYHRL</sequence>
<proteinExistence type="inferred from homology"/>
<comment type="subcellular location">
    <subcellularLocation>
        <location evidence="2">Membrane</location>
        <topology evidence="2">Peripheral membrane protein</topology>
    </subcellularLocation>
</comment>
<comment type="domain">
    <text evidence="1">The LITAF domain is stabilized by a bound zinc ion. The LITAF domain contains an amphipathic helix that mediates interaction with lipid membranes.</text>
</comment>
<comment type="similarity">
    <text evidence="3">Belongs to the CDIP1/LITAF family.</text>
</comment>
<reference key="1">
    <citation type="journal article" date="2004" name="Nature">
        <title>The sequence and analysis of duplication-rich human chromosome 16.</title>
        <authorList>
            <person name="Martin J."/>
            <person name="Han C."/>
            <person name="Gordon L.A."/>
            <person name="Terry A."/>
            <person name="Prabhakar S."/>
            <person name="She X."/>
            <person name="Xie G."/>
            <person name="Hellsten U."/>
            <person name="Chan Y.M."/>
            <person name="Altherr M."/>
            <person name="Couronne O."/>
            <person name="Aerts A."/>
            <person name="Bajorek E."/>
            <person name="Black S."/>
            <person name="Blumer H."/>
            <person name="Branscomb E."/>
            <person name="Brown N.C."/>
            <person name="Bruno W.J."/>
            <person name="Buckingham J.M."/>
            <person name="Callen D.F."/>
            <person name="Campbell C.S."/>
            <person name="Campbell M.L."/>
            <person name="Campbell E.W."/>
            <person name="Caoile C."/>
            <person name="Challacombe J.F."/>
            <person name="Chasteen L.A."/>
            <person name="Chertkov O."/>
            <person name="Chi H.C."/>
            <person name="Christensen M."/>
            <person name="Clark L.M."/>
            <person name="Cohn J.D."/>
            <person name="Denys M."/>
            <person name="Detter J.C."/>
            <person name="Dickson M."/>
            <person name="Dimitrijevic-Bussod M."/>
            <person name="Escobar J."/>
            <person name="Fawcett J.J."/>
            <person name="Flowers D."/>
            <person name="Fotopulos D."/>
            <person name="Glavina T."/>
            <person name="Gomez M."/>
            <person name="Gonzales E."/>
            <person name="Goodstein D."/>
            <person name="Goodwin L.A."/>
            <person name="Grady D.L."/>
            <person name="Grigoriev I."/>
            <person name="Groza M."/>
            <person name="Hammon N."/>
            <person name="Hawkins T."/>
            <person name="Haydu L."/>
            <person name="Hildebrand C.E."/>
            <person name="Huang W."/>
            <person name="Israni S."/>
            <person name="Jett J."/>
            <person name="Jewett P.B."/>
            <person name="Kadner K."/>
            <person name="Kimball H."/>
            <person name="Kobayashi A."/>
            <person name="Krawczyk M.-C."/>
            <person name="Leyba T."/>
            <person name="Longmire J.L."/>
            <person name="Lopez F."/>
            <person name="Lou Y."/>
            <person name="Lowry S."/>
            <person name="Ludeman T."/>
            <person name="Manohar C.F."/>
            <person name="Mark G.A."/>
            <person name="McMurray K.L."/>
            <person name="Meincke L.J."/>
            <person name="Morgan J."/>
            <person name="Moyzis R.K."/>
            <person name="Mundt M.O."/>
            <person name="Munk A.C."/>
            <person name="Nandkeshwar R.D."/>
            <person name="Pitluck S."/>
            <person name="Pollard M."/>
            <person name="Predki P."/>
            <person name="Parson-Quintana B."/>
            <person name="Ramirez L."/>
            <person name="Rash S."/>
            <person name="Retterer J."/>
            <person name="Ricke D.O."/>
            <person name="Robinson D.L."/>
            <person name="Rodriguez A."/>
            <person name="Salamov A."/>
            <person name="Saunders E.H."/>
            <person name="Scott D."/>
            <person name="Shough T."/>
            <person name="Stallings R.L."/>
            <person name="Stalvey M."/>
            <person name="Sutherland R.D."/>
            <person name="Tapia R."/>
            <person name="Tesmer J.G."/>
            <person name="Thayer N."/>
            <person name="Thompson L.S."/>
            <person name="Tice H."/>
            <person name="Torney D.C."/>
            <person name="Tran-Gyamfi M."/>
            <person name="Tsai M."/>
            <person name="Ulanovsky L.E."/>
            <person name="Ustaszewska A."/>
            <person name="Vo N."/>
            <person name="White P.S."/>
            <person name="Williams A.L."/>
            <person name="Wills P.L."/>
            <person name="Wu J.-R."/>
            <person name="Wu K."/>
            <person name="Yang J."/>
            <person name="DeJong P."/>
            <person name="Bruce D."/>
            <person name="Doggett N.A."/>
            <person name="Deaven L."/>
            <person name="Schmutz J."/>
            <person name="Grimwood J."/>
            <person name="Richardson P."/>
            <person name="Rokhsar D.S."/>
            <person name="Eichler E.E."/>
            <person name="Gilna P."/>
            <person name="Lucas S.M."/>
            <person name="Myers R.M."/>
            <person name="Rubin E.M."/>
            <person name="Pennacchio L.A."/>
        </authorList>
    </citation>
    <scope>NUCLEOTIDE SEQUENCE [LARGE SCALE GENOMIC DNA]</scope>
</reference>
<keyword id="KW-0472">Membrane</keyword>
<keyword id="KW-0479">Metal-binding</keyword>
<keyword id="KW-1185">Reference proteome</keyword>
<keyword id="KW-0862">Zinc</keyword>
<organism>
    <name type="scientific">Homo sapiens</name>
    <name type="common">Human</name>
    <dbReference type="NCBI Taxonomy" id="9606"/>
    <lineage>
        <taxon>Eukaryota</taxon>
        <taxon>Metazoa</taxon>
        <taxon>Chordata</taxon>
        <taxon>Craniata</taxon>
        <taxon>Vertebrata</taxon>
        <taxon>Euteleostomi</taxon>
        <taxon>Mammalia</taxon>
        <taxon>Eutheria</taxon>
        <taxon>Euarchontoglires</taxon>
        <taxon>Primates</taxon>
        <taxon>Haplorrhini</taxon>
        <taxon>Catarrhini</taxon>
        <taxon>Hominidae</taxon>
        <taxon>Homo</taxon>
    </lineage>
</organism>